<evidence type="ECO:0000255" key="1">
    <source>
        <dbReference type="HAMAP-Rule" id="MF_00369"/>
    </source>
</evidence>
<evidence type="ECO:0000305" key="2"/>
<dbReference type="EMBL" id="CP000816">
    <property type="protein sequence ID" value="ABU81960.1"/>
    <property type="molecule type" value="Genomic_DNA"/>
</dbReference>
<dbReference type="RefSeq" id="WP_012122924.1">
    <property type="nucleotide sequence ID" value="NC_009776.1"/>
</dbReference>
<dbReference type="SMR" id="A8AAK8"/>
<dbReference type="STRING" id="453591.Igni_0778"/>
<dbReference type="GeneID" id="5562515"/>
<dbReference type="KEGG" id="iho:Igni_0778"/>
<dbReference type="eggNOG" id="arCOG04129">
    <property type="taxonomic scope" value="Archaea"/>
</dbReference>
<dbReference type="HOGENOM" id="CLU_103610_1_1_2"/>
<dbReference type="OrthoDB" id="6295at2157"/>
<dbReference type="PhylomeDB" id="A8AAK8"/>
<dbReference type="Proteomes" id="UP000000262">
    <property type="component" value="Chromosome"/>
</dbReference>
<dbReference type="GO" id="GO:1990904">
    <property type="term" value="C:ribonucleoprotein complex"/>
    <property type="evidence" value="ECO:0007669"/>
    <property type="project" value="UniProtKB-KW"/>
</dbReference>
<dbReference type="GO" id="GO:0005840">
    <property type="term" value="C:ribosome"/>
    <property type="evidence" value="ECO:0007669"/>
    <property type="project" value="UniProtKB-KW"/>
</dbReference>
<dbReference type="GO" id="GO:0003735">
    <property type="term" value="F:structural constituent of ribosome"/>
    <property type="evidence" value="ECO:0007669"/>
    <property type="project" value="InterPro"/>
</dbReference>
<dbReference type="GO" id="GO:0006412">
    <property type="term" value="P:translation"/>
    <property type="evidence" value="ECO:0007669"/>
    <property type="project" value="UniProtKB-UniRule"/>
</dbReference>
<dbReference type="FunFam" id="2.30.30.70:FF:000001">
    <property type="entry name" value="60S ribosomal protein L21"/>
    <property type="match status" value="1"/>
</dbReference>
<dbReference type="Gene3D" id="2.30.30.70">
    <property type="entry name" value="Ribosomal protein L21"/>
    <property type="match status" value="1"/>
</dbReference>
<dbReference type="HAMAP" id="MF_00369">
    <property type="entry name" value="Ribosomal_eL21"/>
    <property type="match status" value="1"/>
</dbReference>
<dbReference type="InterPro" id="IPR001147">
    <property type="entry name" value="Ribosomal_eL21"/>
</dbReference>
<dbReference type="InterPro" id="IPR022856">
    <property type="entry name" value="Ribosomal_eL21_arc"/>
</dbReference>
<dbReference type="InterPro" id="IPR018259">
    <property type="entry name" value="Ribosomal_eL21_CS"/>
</dbReference>
<dbReference type="InterPro" id="IPR036948">
    <property type="entry name" value="Ribosomal_eL21_sf"/>
</dbReference>
<dbReference type="InterPro" id="IPR008991">
    <property type="entry name" value="Translation_prot_SH3-like_sf"/>
</dbReference>
<dbReference type="NCBIfam" id="NF003303">
    <property type="entry name" value="PRK04306.1"/>
    <property type="match status" value="1"/>
</dbReference>
<dbReference type="PANTHER" id="PTHR20981">
    <property type="entry name" value="60S RIBOSOMAL PROTEIN L21"/>
    <property type="match status" value="1"/>
</dbReference>
<dbReference type="Pfam" id="PF01157">
    <property type="entry name" value="Ribosomal_L21e"/>
    <property type="match status" value="1"/>
</dbReference>
<dbReference type="SUPFAM" id="SSF50104">
    <property type="entry name" value="Translation proteins SH3-like domain"/>
    <property type="match status" value="1"/>
</dbReference>
<dbReference type="PROSITE" id="PS01171">
    <property type="entry name" value="RIBOSOMAL_L21E"/>
    <property type="match status" value="1"/>
</dbReference>
<keyword id="KW-1185">Reference proteome</keyword>
<keyword id="KW-0687">Ribonucleoprotein</keyword>
<keyword id="KW-0689">Ribosomal protein</keyword>
<comment type="similarity">
    <text evidence="1">Belongs to the eukaryotic ribosomal protein eL21 family.</text>
</comment>
<feature type="chain" id="PRO_1000007116" description="Large ribosomal subunit protein eL21">
    <location>
        <begin position="1"/>
        <end position="99"/>
    </location>
</feature>
<name>RL21_IGNH4</name>
<protein>
    <recommendedName>
        <fullName evidence="1">Large ribosomal subunit protein eL21</fullName>
    </recommendedName>
    <alternativeName>
        <fullName evidence="2">50S ribosomal protein L21e</fullName>
    </alternativeName>
</protein>
<organism>
    <name type="scientific">Ignicoccus hospitalis (strain KIN4/I / DSM 18386 / JCM 14125)</name>
    <dbReference type="NCBI Taxonomy" id="453591"/>
    <lineage>
        <taxon>Archaea</taxon>
        <taxon>Thermoproteota</taxon>
        <taxon>Thermoprotei</taxon>
        <taxon>Desulfurococcales</taxon>
        <taxon>Desulfurococcaceae</taxon>
        <taxon>Ignicoccus</taxon>
    </lineage>
</organism>
<gene>
    <name evidence="1" type="primary">rpl21e</name>
    <name type="ordered locus">Igni_0778</name>
</gene>
<sequence>MVKAPKGWRHRTRHIYRKRVREKGAVPPLSLVLIDYKPGDKVIIDPNPAIWSGLPHRRFCGKVGEVVGKRGKAYLVKVRDGDVYKTIIVRPEHLRPFKQ</sequence>
<accession>A8AAK8</accession>
<proteinExistence type="inferred from homology"/>
<reference key="1">
    <citation type="journal article" date="2008" name="Genome Biol.">
        <title>A genomic analysis of the archaeal system Ignicoccus hospitalis-Nanoarchaeum equitans.</title>
        <authorList>
            <person name="Podar M."/>
            <person name="Anderson I."/>
            <person name="Makarova K.S."/>
            <person name="Elkins J.G."/>
            <person name="Ivanova N."/>
            <person name="Wall M.A."/>
            <person name="Lykidis A."/>
            <person name="Mavromatis K."/>
            <person name="Sun H."/>
            <person name="Hudson M.E."/>
            <person name="Chen W."/>
            <person name="Deciu C."/>
            <person name="Hutchison D."/>
            <person name="Eads J.R."/>
            <person name="Anderson A."/>
            <person name="Fernandes F."/>
            <person name="Szeto E."/>
            <person name="Lapidus A."/>
            <person name="Kyrpides N.C."/>
            <person name="Saier M.H. Jr."/>
            <person name="Richardson P.M."/>
            <person name="Rachel R."/>
            <person name="Huber H."/>
            <person name="Eisen J.A."/>
            <person name="Koonin E.V."/>
            <person name="Keller M."/>
            <person name="Stetter K.O."/>
        </authorList>
    </citation>
    <scope>NUCLEOTIDE SEQUENCE [LARGE SCALE GENOMIC DNA]</scope>
    <source>
        <strain>KIN4/I / DSM 18386 / JCM 14125</strain>
    </source>
</reference>